<sequence length="75" mass="8734">MGSLQLTLVLFVLLSYVPPVRSGVNMYIKRIYDTCWKLKGICRNTCQKEEIYHIFCGIQSLCCLEKKEMPVLFVK</sequence>
<name>DFB30_MOUSE</name>
<gene>
    <name type="primary">Defb30</name>
</gene>
<dbReference type="EMBL" id="DQ012040">
    <property type="protein sequence ID" value="AAY59776.1"/>
    <property type="molecule type" value="mRNA"/>
</dbReference>
<dbReference type="EMBL" id="DQ141309">
    <property type="protein sequence ID" value="ABA26845.1"/>
    <property type="molecule type" value="mRNA"/>
</dbReference>
<dbReference type="EMBL" id="BC132184">
    <property type="protein sequence ID" value="AAI32185.1"/>
    <property type="molecule type" value="mRNA"/>
</dbReference>
<dbReference type="EMBL" id="BC132214">
    <property type="protein sequence ID" value="AAI32215.1"/>
    <property type="molecule type" value="mRNA"/>
</dbReference>
<dbReference type="CCDS" id="CCDS36947.1"/>
<dbReference type="RefSeq" id="NP_001034655.1">
    <property type="nucleotide sequence ID" value="NM_001039566.4"/>
</dbReference>
<dbReference type="RefSeq" id="NP_001399512.1">
    <property type="nucleotide sequence ID" value="NM_001412583.1"/>
</dbReference>
<dbReference type="SMR" id="Q30KN4"/>
<dbReference type="FunCoup" id="Q30KN4">
    <property type="interactions" value="4"/>
</dbReference>
<dbReference type="STRING" id="10090.ENSMUSP00000106838"/>
<dbReference type="jPOST" id="Q30KN4"/>
<dbReference type="PaxDb" id="10090-ENSMUSP00000106838"/>
<dbReference type="Ensembl" id="ENSMUST00000100490.3">
    <property type="protein sequence ID" value="ENSMUSP00000098059.3"/>
    <property type="gene ID" value="ENSMUSG00000075571.9"/>
</dbReference>
<dbReference type="Ensembl" id="ENSMUST00000111207.8">
    <property type="protein sequence ID" value="ENSMUSP00000106838.2"/>
    <property type="gene ID" value="ENSMUSG00000075571.9"/>
</dbReference>
<dbReference type="GeneID" id="73670"/>
<dbReference type="KEGG" id="mmu:73670"/>
<dbReference type="UCSC" id="uc007uhd.2">
    <property type="organism name" value="mouse"/>
</dbReference>
<dbReference type="AGR" id="MGI:1920920"/>
<dbReference type="CTD" id="73670"/>
<dbReference type="MGI" id="MGI:1920920">
    <property type="gene designation" value="Defb30"/>
</dbReference>
<dbReference type="VEuPathDB" id="HostDB:ENSMUSG00000075571"/>
<dbReference type="eggNOG" id="ENOG502TF02">
    <property type="taxonomic scope" value="Eukaryota"/>
</dbReference>
<dbReference type="GeneTree" id="ENSGT00530000064429"/>
<dbReference type="HOGENOM" id="CLU_181906_3_0_1"/>
<dbReference type="InParanoid" id="Q30KN4"/>
<dbReference type="OMA" id="NTCWRTK"/>
<dbReference type="OrthoDB" id="9534593at2759"/>
<dbReference type="PhylomeDB" id="Q30KN4"/>
<dbReference type="Reactome" id="R-MMU-1461957">
    <property type="pathway name" value="Beta defensins"/>
</dbReference>
<dbReference type="Reactome" id="R-MMU-1461973">
    <property type="pathway name" value="Defensins"/>
</dbReference>
<dbReference type="BioGRID-ORCS" id="73670">
    <property type="hits" value="4 hits in 76 CRISPR screens"/>
</dbReference>
<dbReference type="PRO" id="PR:Q30KN4"/>
<dbReference type="Proteomes" id="UP000000589">
    <property type="component" value="Chromosome 14"/>
</dbReference>
<dbReference type="RNAct" id="Q30KN4">
    <property type="molecule type" value="protein"/>
</dbReference>
<dbReference type="Bgee" id="ENSMUSG00000075571">
    <property type="expression patterns" value="Expressed in spermatid and 15 other cell types or tissues"/>
</dbReference>
<dbReference type="ExpressionAtlas" id="Q30KN4">
    <property type="expression patterns" value="baseline and differential"/>
</dbReference>
<dbReference type="GO" id="GO:0005576">
    <property type="term" value="C:extracellular region"/>
    <property type="evidence" value="ECO:0007669"/>
    <property type="project" value="UniProtKB-SubCell"/>
</dbReference>
<dbReference type="GO" id="GO:0042742">
    <property type="term" value="P:defense response to bacterium"/>
    <property type="evidence" value="ECO:0007669"/>
    <property type="project" value="UniProtKB-KW"/>
</dbReference>
<dbReference type="GO" id="GO:0045087">
    <property type="term" value="P:innate immune response"/>
    <property type="evidence" value="ECO:0007669"/>
    <property type="project" value="InterPro"/>
</dbReference>
<dbReference type="InterPro" id="IPR050544">
    <property type="entry name" value="Beta-defensin"/>
</dbReference>
<dbReference type="InterPro" id="IPR025933">
    <property type="entry name" value="Beta_defensin_dom"/>
</dbReference>
<dbReference type="PANTHER" id="PTHR15001">
    <property type="entry name" value="BETA-DEFENSIN 123-RELATED"/>
    <property type="match status" value="1"/>
</dbReference>
<dbReference type="PANTHER" id="PTHR15001:SF10">
    <property type="entry name" value="BETA-DEFENSIN 135"/>
    <property type="match status" value="1"/>
</dbReference>
<dbReference type="Pfam" id="PF13841">
    <property type="entry name" value="Defensin_beta_2"/>
    <property type="match status" value="1"/>
</dbReference>
<keyword id="KW-0044">Antibiotic</keyword>
<keyword id="KW-0929">Antimicrobial</keyword>
<keyword id="KW-0211">Defensin</keyword>
<keyword id="KW-1015">Disulfide bond</keyword>
<keyword id="KW-1185">Reference proteome</keyword>
<keyword id="KW-0964">Secreted</keyword>
<keyword id="KW-0732">Signal</keyword>
<protein>
    <recommendedName>
        <fullName>Beta-defensin 30</fullName>
        <shortName>BD-30</shortName>
        <shortName>mBD-30</shortName>
    </recommendedName>
    <alternativeName>
        <fullName>Defensin, beta 30</fullName>
    </alternativeName>
</protein>
<accession>Q30KN4</accession>
<evidence type="ECO:0000250" key="1"/>
<evidence type="ECO:0000255" key="2"/>
<evidence type="ECO:0000305" key="3"/>
<proteinExistence type="inferred from homology"/>
<organism>
    <name type="scientific">Mus musculus</name>
    <name type="common">Mouse</name>
    <dbReference type="NCBI Taxonomy" id="10090"/>
    <lineage>
        <taxon>Eukaryota</taxon>
        <taxon>Metazoa</taxon>
        <taxon>Chordata</taxon>
        <taxon>Craniata</taxon>
        <taxon>Vertebrata</taxon>
        <taxon>Euteleostomi</taxon>
        <taxon>Mammalia</taxon>
        <taxon>Eutheria</taxon>
        <taxon>Euarchontoglires</taxon>
        <taxon>Glires</taxon>
        <taxon>Rodentia</taxon>
        <taxon>Myomorpha</taxon>
        <taxon>Muroidea</taxon>
        <taxon>Muridae</taxon>
        <taxon>Murinae</taxon>
        <taxon>Mus</taxon>
        <taxon>Mus</taxon>
    </lineage>
</organism>
<feature type="signal peptide" evidence="2">
    <location>
        <begin position="1"/>
        <end position="22"/>
    </location>
</feature>
<feature type="chain" id="PRO_0000352710" description="Beta-defensin 30">
    <location>
        <begin position="23"/>
        <end position="75"/>
    </location>
</feature>
<feature type="disulfide bond" evidence="1">
    <location>
        <begin position="35"/>
        <end position="62"/>
    </location>
</feature>
<feature type="disulfide bond" evidence="1">
    <location>
        <begin position="42"/>
        <end position="56"/>
    </location>
</feature>
<feature type="disulfide bond" evidence="1">
    <location>
        <begin position="46"/>
        <end position="63"/>
    </location>
</feature>
<comment type="function">
    <text evidence="1">Has antibacterial activity.</text>
</comment>
<comment type="subcellular location">
    <subcellularLocation>
        <location evidence="1">Secreted</location>
    </subcellularLocation>
</comment>
<comment type="similarity">
    <text evidence="3">Belongs to the beta-defensin family.</text>
</comment>
<reference key="1">
    <citation type="journal article" date="2005" name="Physiol. Genomics">
        <title>Cross-species analysis of the mammalian beta-defensin gene family: presence of syntenic gene clusters and preferential expression in the male reproductive tract.</title>
        <authorList>
            <person name="Patil A.A."/>
            <person name="Cai Y."/>
            <person name="Sang Y."/>
            <person name="Blecha F."/>
            <person name="Zhang G."/>
        </authorList>
    </citation>
    <scope>NUCLEOTIDE SEQUENCE [MRNA]</scope>
</reference>
<reference key="2">
    <citation type="submission" date="2005-07" db="EMBL/GenBank/DDBJ databases">
        <title>Male reproductive tract specific rodent beta defensins.</title>
        <authorList>
            <person name="Radhakrishnan Y."/>
            <person name="Yenugu S."/>
            <person name="Hamil K.G."/>
            <person name="French F.S."/>
            <person name="Hall S.H."/>
        </authorList>
    </citation>
    <scope>NUCLEOTIDE SEQUENCE [MRNA]</scope>
    <source>
        <strain>CD-1</strain>
        <tissue>Epididymis</tissue>
    </source>
</reference>
<reference key="3">
    <citation type="journal article" date="2004" name="Genome Res.">
        <title>The status, quality, and expansion of the NIH full-length cDNA project: the Mammalian Gene Collection (MGC).</title>
        <authorList>
            <consortium name="The MGC Project Team"/>
        </authorList>
    </citation>
    <scope>NUCLEOTIDE SEQUENCE [LARGE SCALE MRNA]</scope>
    <source>
        <tissue>Testis</tissue>
    </source>
</reference>